<evidence type="ECO:0000255" key="1">
    <source>
        <dbReference type="HAMAP-Rule" id="MF_01709"/>
    </source>
</evidence>
<sequence>MASVTLKNVCKAYGDVLISKNVDLEIQEGEFVVFVGPSGCGKSTLLRCIAGLEDITSGDLYIGEQRMNDVEPSKRGVGMVFQSYALYPHLNLYDNMSFGLKLSKADKSEIKKRVDHAAEILQLSHLLDRQPKALSGGQRQRVAIGRTLVSQPNVFLLDEPLSNLDAALRVQMRSEITKLQRKLGCTMIYVTHDQVEAMTMADKIVVLDAGFVSQVGKPLELYHYPQNRFVAGFIGSPKMNFMSVFIEGVEKDRVQVQLSNGTTFWIPVDGTTVTRGERMSLGIRPEHLVEAEHGDAKIEGKVMIVEKLGNETQVYMNLKGSDSDVIYRQPDTLDVETGDTLTIGIPAHRCHLFHSDGRACRRLHKEKGVDLPA</sequence>
<feature type="chain" id="PRO_0000092484" description="Maltose/maltodextrin import ATP-binding protein MalK">
    <location>
        <begin position="1"/>
        <end position="373"/>
    </location>
</feature>
<feature type="domain" description="ABC transporter" evidence="1">
    <location>
        <begin position="4"/>
        <end position="234"/>
    </location>
</feature>
<feature type="binding site" evidence="1">
    <location>
        <begin position="36"/>
        <end position="43"/>
    </location>
    <ligand>
        <name>ATP</name>
        <dbReference type="ChEBI" id="CHEBI:30616"/>
    </ligand>
</feature>
<feature type="sequence variant" description="In strain: Classical 569B / ATCC 25870 /Serotype O1.">
    <original>K</original>
    <variation>Q</variation>
    <location>
        <position position="365"/>
    </location>
</feature>
<dbReference type="EC" id="7.5.2.1" evidence="1"/>
<dbReference type="EMBL" id="AF259974">
    <property type="protein sequence ID" value="AAF70304.1"/>
    <property type="molecule type" value="Genomic_DNA"/>
</dbReference>
<dbReference type="EMBL" id="AE003853">
    <property type="protein sequence ID" value="AAF96842.1"/>
    <property type="molecule type" value="Genomic_DNA"/>
</dbReference>
<dbReference type="PIR" id="A82398">
    <property type="entry name" value="A82398"/>
</dbReference>
<dbReference type="RefSeq" id="NP_233330.1">
    <property type="nucleotide sequence ID" value="NC_002506.1"/>
</dbReference>
<dbReference type="RefSeq" id="WP_000179238.1">
    <property type="nucleotide sequence ID" value="NZ_LT906615.1"/>
</dbReference>
<dbReference type="SMR" id="Q9KL04"/>
<dbReference type="STRING" id="243277.VC_A0946"/>
<dbReference type="DNASU" id="2612547"/>
<dbReference type="EnsemblBacteria" id="AAF96842">
    <property type="protein sequence ID" value="AAF96842"/>
    <property type="gene ID" value="VC_A0946"/>
</dbReference>
<dbReference type="KEGG" id="vch:VC_A0946"/>
<dbReference type="PATRIC" id="fig|243277.26.peg.3558"/>
<dbReference type="eggNOG" id="COG3842">
    <property type="taxonomic scope" value="Bacteria"/>
</dbReference>
<dbReference type="HOGENOM" id="CLU_000604_1_1_6"/>
<dbReference type="Proteomes" id="UP000000584">
    <property type="component" value="Chromosome 2"/>
</dbReference>
<dbReference type="GO" id="GO:0055052">
    <property type="term" value="C:ATP-binding cassette (ABC) transporter complex, substrate-binding subunit-containing"/>
    <property type="evidence" value="ECO:0000318"/>
    <property type="project" value="GO_Central"/>
</dbReference>
<dbReference type="GO" id="GO:1990060">
    <property type="term" value="C:maltose transport complex"/>
    <property type="evidence" value="ECO:0000318"/>
    <property type="project" value="GO_Central"/>
</dbReference>
<dbReference type="GO" id="GO:0015423">
    <property type="term" value="F:ABC-type maltose transporter activity"/>
    <property type="evidence" value="ECO:0000318"/>
    <property type="project" value="GO_Central"/>
</dbReference>
<dbReference type="GO" id="GO:0005524">
    <property type="term" value="F:ATP binding"/>
    <property type="evidence" value="ECO:0007669"/>
    <property type="project" value="UniProtKB-KW"/>
</dbReference>
<dbReference type="GO" id="GO:0016887">
    <property type="term" value="F:ATP hydrolysis activity"/>
    <property type="evidence" value="ECO:0007669"/>
    <property type="project" value="InterPro"/>
</dbReference>
<dbReference type="CDD" id="cd03301">
    <property type="entry name" value="ABC_MalK_N"/>
    <property type="match status" value="1"/>
</dbReference>
<dbReference type="FunFam" id="3.40.50.300:FF:000042">
    <property type="entry name" value="Maltose/maltodextrin ABC transporter, ATP-binding protein"/>
    <property type="match status" value="1"/>
</dbReference>
<dbReference type="FunFam" id="2.40.50.100:FF:000014">
    <property type="entry name" value="Maltose/maltodextrin import ATP-binding protein MalK"/>
    <property type="match status" value="1"/>
</dbReference>
<dbReference type="Gene3D" id="2.40.50.100">
    <property type="match status" value="1"/>
</dbReference>
<dbReference type="Gene3D" id="2.40.50.140">
    <property type="entry name" value="Nucleic acid-binding proteins"/>
    <property type="match status" value="1"/>
</dbReference>
<dbReference type="Gene3D" id="3.40.50.300">
    <property type="entry name" value="P-loop containing nucleotide triphosphate hydrolases"/>
    <property type="match status" value="1"/>
</dbReference>
<dbReference type="InterPro" id="IPR003593">
    <property type="entry name" value="AAA+_ATPase"/>
</dbReference>
<dbReference type="InterPro" id="IPR003439">
    <property type="entry name" value="ABC_transporter-like_ATP-bd"/>
</dbReference>
<dbReference type="InterPro" id="IPR017871">
    <property type="entry name" value="ABC_transporter-like_CS"/>
</dbReference>
<dbReference type="InterPro" id="IPR015855">
    <property type="entry name" value="ABC_transpr_MalK-like"/>
</dbReference>
<dbReference type="InterPro" id="IPR047641">
    <property type="entry name" value="ABC_transpr_MalK/UgpC-like"/>
</dbReference>
<dbReference type="InterPro" id="IPR008995">
    <property type="entry name" value="Mo/tungstate-bd_C_term_dom"/>
</dbReference>
<dbReference type="InterPro" id="IPR012340">
    <property type="entry name" value="NA-bd_OB-fold"/>
</dbReference>
<dbReference type="InterPro" id="IPR027417">
    <property type="entry name" value="P-loop_NTPase"/>
</dbReference>
<dbReference type="InterPro" id="IPR013611">
    <property type="entry name" value="Transp-assoc_OB_typ2"/>
</dbReference>
<dbReference type="NCBIfam" id="NF008233">
    <property type="entry name" value="PRK11000.1"/>
    <property type="match status" value="1"/>
</dbReference>
<dbReference type="NCBIfam" id="NF008653">
    <property type="entry name" value="PRK11650.1"/>
    <property type="match status" value="1"/>
</dbReference>
<dbReference type="PANTHER" id="PTHR43875">
    <property type="entry name" value="MALTODEXTRIN IMPORT ATP-BINDING PROTEIN MSMX"/>
    <property type="match status" value="1"/>
</dbReference>
<dbReference type="PANTHER" id="PTHR43875:SF3">
    <property type="entry name" value="MALTOSE_MALTODEXTRIN IMPORT ATP-BINDING PROTEIN MALK"/>
    <property type="match status" value="1"/>
</dbReference>
<dbReference type="Pfam" id="PF00005">
    <property type="entry name" value="ABC_tran"/>
    <property type="match status" value="1"/>
</dbReference>
<dbReference type="Pfam" id="PF08402">
    <property type="entry name" value="TOBE_2"/>
    <property type="match status" value="1"/>
</dbReference>
<dbReference type="SMART" id="SM00382">
    <property type="entry name" value="AAA"/>
    <property type="match status" value="1"/>
</dbReference>
<dbReference type="SUPFAM" id="SSF50331">
    <property type="entry name" value="MOP-like"/>
    <property type="match status" value="1"/>
</dbReference>
<dbReference type="SUPFAM" id="SSF52540">
    <property type="entry name" value="P-loop containing nucleoside triphosphate hydrolases"/>
    <property type="match status" value="1"/>
</dbReference>
<dbReference type="PROSITE" id="PS00211">
    <property type="entry name" value="ABC_TRANSPORTER_1"/>
    <property type="match status" value="1"/>
</dbReference>
<dbReference type="PROSITE" id="PS50893">
    <property type="entry name" value="ABC_TRANSPORTER_2"/>
    <property type="match status" value="1"/>
</dbReference>
<dbReference type="PROSITE" id="PS51245">
    <property type="entry name" value="MALK"/>
    <property type="match status" value="1"/>
</dbReference>
<organism>
    <name type="scientific">Vibrio cholerae serotype O1 (strain ATCC 39315 / El Tor Inaba N16961)</name>
    <dbReference type="NCBI Taxonomy" id="243277"/>
    <lineage>
        <taxon>Bacteria</taxon>
        <taxon>Pseudomonadati</taxon>
        <taxon>Pseudomonadota</taxon>
        <taxon>Gammaproteobacteria</taxon>
        <taxon>Vibrionales</taxon>
        <taxon>Vibrionaceae</taxon>
        <taxon>Vibrio</taxon>
    </lineage>
</organism>
<proteinExistence type="inferred from homology"/>
<keyword id="KW-0067">ATP-binding</keyword>
<keyword id="KW-0997">Cell inner membrane</keyword>
<keyword id="KW-1003">Cell membrane</keyword>
<keyword id="KW-0472">Membrane</keyword>
<keyword id="KW-0547">Nucleotide-binding</keyword>
<keyword id="KW-1185">Reference proteome</keyword>
<keyword id="KW-0762">Sugar transport</keyword>
<keyword id="KW-1278">Translocase</keyword>
<keyword id="KW-0813">Transport</keyword>
<comment type="function">
    <text evidence="1">Part of the ABC transporter complex MalEFGK involved in maltose/maltodextrin import. Responsible for energy coupling to the transport system.</text>
</comment>
<comment type="catalytic activity">
    <reaction evidence="1">
        <text>D-maltose(out) + ATP + H2O = D-maltose(in) + ADP + phosphate + H(+)</text>
        <dbReference type="Rhea" id="RHEA:22132"/>
        <dbReference type="ChEBI" id="CHEBI:15377"/>
        <dbReference type="ChEBI" id="CHEBI:15378"/>
        <dbReference type="ChEBI" id="CHEBI:17306"/>
        <dbReference type="ChEBI" id="CHEBI:30616"/>
        <dbReference type="ChEBI" id="CHEBI:43474"/>
        <dbReference type="ChEBI" id="CHEBI:456216"/>
        <dbReference type="EC" id="7.5.2.1"/>
    </reaction>
</comment>
<comment type="subunit">
    <text evidence="1">The complex is composed of two ATP-binding proteins (MalK), two transmembrane proteins (MalG and MalK) and a solute-binding protein (MalE).</text>
</comment>
<comment type="subcellular location">
    <subcellularLocation>
        <location evidence="1">Cell inner membrane</location>
        <topology evidence="1">Peripheral membrane protein</topology>
    </subcellularLocation>
</comment>
<comment type="similarity">
    <text evidence="1">Belongs to the ABC transporter superfamily. Maltooligosaccharide importer (TC 3.A.1.1.1) family.</text>
</comment>
<reference key="1">
    <citation type="submission" date="2000-04" db="EMBL/GenBank/DDBJ databases">
        <title>Probable MalK protein of Vibrio cholerae.</title>
        <authorList>
            <person name="Dutta P.P."/>
            <person name="Roychoudhury S."/>
            <person name="Chaudhuri K."/>
        </authorList>
    </citation>
    <scope>NUCLEOTIDE SEQUENCE [GENOMIC DNA]</scope>
    <source>
        <strain>ATCC 25870 / Classical Inaba 569B / Serotype O1</strain>
    </source>
</reference>
<reference key="2">
    <citation type="journal article" date="2000" name="Nature">
        <title>DNA sequence of both chromosomes of the cholera pathogen Vibrio cholerae.</title>
        <authorList>
            <person name="Heidelberg J.F."/>
            <person name="Eisen J.A."/>
            <person name="Nelson W.C."/>
            <person name="Clayton R.A."/>
            <person name="Gwinn M.L."/>
            <person name="Dodson R.J."/>
            <person name="Haft D.H."/>
            <person name="Hickey E.K."/>
            <person name="Peterson J.D."/>
            <person name="Umayam L.A."/>
            <person name="Gill S.R."/>
            <person name="Nelson K.E."/>
            <person name="Read T.D."/>
            <person name="Tettelin H."/>
            <person name="Richardson D.L."/>
            <person name="Ermolaeva M.D."/>
            <person name="Vamathevan J.J."/>
            <person name="Bass S."/>
            <person name="Qin H."/>
            <person name="Dragoi I."/>
            <person name="Sellers P."/>
            <person name="McDonald L.A."/>
            <person name="Utterback T.R."/>
            <person name="Fleischmann R.D."/>
            <person name="Nierman W.C."/>
            <person name="White O."/>
            <person name="Salzberg S.L."/>
            <person name="Smith H.O."/>
            <person name="Colwell R.R."/>
            <person name="Mekalanos J.J."/>
            <person name="Venter J.C."/>
            <person name="Fraser C.M."/>
        </authorList>
    </citation>
    <scope>NUCLEOTIDE SEQUENCE [LARGE SCALE GENOMIC DNA]</scope>
    <source>
        <strain>ATCC 39315 / El Tor Inaba N16961</strain>
    </source>
</reference>
<protein>
    <recommendedName>
        <fullName evidence="1">Maltose/maltodextrin import ATP-binding protein MalK</fullName>
        <ecNumber evidence="1">7.5.2.1</ecNumber>
    </recommendedName>
</protein>
<gene>
    <name evidence="1" type="primary">malK</name>
    <name type="ordered locus">VC_A0946</name>
</gene>
<name>MALK_VIBCH</name>
<accession>Q9KL04</accession>
<accession>Q9L531</accession>